<proteinExistence type="inferred from homology"/>
<sequence>MYAALIESVVKILQKAEFSVADLAETKPRCFDIVARKDDVVLLIKVLYNVDSLKPEAAEEMKKLTKILQASPIVIGERFKFDFLERGVVYTRYGLPVINLATFYDFIVEGIYPYVYSAPGGYYVKLDSERIREARERLGLSVGDMAKMLGVSRRTVKKYEEGTDTTLSTAAKIEEIIGTFAIKEIDLLNFVEADISEEEEVEGEEGEIIEQLRVIGLSVYPVRQAPFDAVSQAKEDQILTGFKQVREIEKRARLLGRISEAIDAEAAYITDKACKKKVESVVFVLKEELYSVSSAKDFISLLKEKSCEE</sequence>
<accession>O28487</accession>
<name>Y1787_ARCFU</name>
<keyword id="KW-0238">DNA-binding</keyword>
<keyword id="KW-1185">Reference proteome</keyword>
<keyword id="KW-0804">Transcription</keyword>
<keyword id="KW-0805">Transcription regulation</keyword>
<evidence type="ECO:0000255" key="1">
    <source>
        <dbReference type="HAMAP-Rule" id="MF_00584"/>
    </source>
</evidence>
<organism>
    <name type="scientific">Archaeoglobus fulgidus (strain ATCC 49558 / DSM 4304 / JCM 9628 / NBRC 100126 / VC-16)</name>
    <dbReference type="NCBI Taxonomy" id="224325"/>
    <lineage>
        <taxon>Archaea</taxon>
        <taxon>Methanobacteriati</taxon>
        <taxon>Methanobacteriota</taxon>
        <taxon>Archaeoglobi</taxon>
        <taxon>Archaeoglobales</taxon>
        <taxon>Archaeoglobaceae</taxon>
        <taxon>Archaeoglobus</taxon>
    </lineage>
</organism>
<dbReference type="EMBL" id="AE000782">
    <property type="protein sequence ID" value="AAB89460.1"/>
    <property type="molecule type" value="Genomic_DNA"/>
</dbReference>
<dbReference type="PIR" id="B69473">
    <property type="entry name" value="B69473"/>
</dbReference>
<dbReference type="RefSeq" id="WP_010879283.1">
    <property type="nucleotide sequence ID" value="NC_000917.1"/>
</dbReference>
<dbReference type="SMR" id="O28487"/>
<dbReference type="STRING" id="224325.AF_1787"/>
<dbReference type="PaxDb" id="224325-AF_1787"/>
<dbReference type="EnsemblBacteria" id="AAB89460">
    <property type="protein sequence ID" value="AAB89460"/>
    <property type="gene ID" value="AF_1787"/>
</dbReference>
<dbReference type="KEGG" id="afu:AF_1787"/>
<dbReference type="eggNOG" id="arCOG04152">
    <property type="taxonomic scope" value="Archaea"/>
</dbReference>
<dbReference type="HOGENOM" id="CLU_075726_0_0_2"/>
<dbReference type="OrthoDB" id="31424at2157"/>
<dbReference type="PhylomeDB" id="O28487"/>
<dbReference type="Proteomes" id="UP000002199">
    <property type="component" value="Chromosome"/>
</dbReference>
<dbReference type="GO" id="GO:0003677">
    <property type="term" value="F:DNA binding"/>
    <property type="evidence" value="ECO:0007669"/>
    <property type="project" value="UniProtKB-KW"/>
</dbReference>
<dbReference type="GO" id="GO:0003700">
    <property type="term" value="F:DNA-binding transcription factor activity"/>
    <property type="evidence" value="ECO:0007669"/>
    <property type="project" value="UniProtKB-UniRule"/>
</dbReference>
<dbReference type="CDD" id="cd00093">
    <property type="entry name" value="HTH_XRE"/>
    <property type="match status" value="1"/>
</dbReference>
<dbReference type="Gene3D" id="1.10.260.40">
    <property type="entry name" value="lambda repressor-like DNA-binding domains"/>
    <property type="match status" value="1"/>
</dbReference>
<dbReference type="HAMAP" id="MF_00584">
    <property type="entry name" value="HTH_type_cro_C1"/>
    <property type="match status" value="1"/>
</dbReference>
<dbReference type="InterPro" id="IPR020886">
    <property type="entry name" value="Arc_TR_HTH"/>
</dbReference>
<dbReference type="InterPro" id="IPR001387">
    <property type="entry name" value="Cro/C1-type_HTH"/>
</dbReference>
<dbReference type="InterPro" id="IPR010982">
    <property type="entry name" value="Lambda_DNA-bd_dom_sf"/>
</dbReference>
<dbReference type="NCBIfam" id="NF003162">
    <property type="entry name" value="PRK04140.1"/>
    <property type="match status" value="1"/>
</dbReference>
<dbReference type="Pfam" id="PF01381">
    <property type="entry name" value="HTH_3"/>
    <property type="match status" value="1"/>
</dbReference>
<dbReference type="SMART" id="SM00530">
    <property type="entry name" value="HTH_XRE"/>
    <property type="match status" value="1"/>
</dbReference>
<dbReference type="SUPFAM" id="SSF47413">
    <property type="entry name" value="lambda repressor-like DNA-binding domains"/>
    <property type="match status" value="1"/>
</dbReference>
<dbReference type="PROSITE" id="PS50943">
    <property type="entry name" value="HTH_CROC1"/>
    <property type="match status" value="1"/>
</dbReference>
<reference key="1">
    <citation type="journal article" date="1997" name="Nature">
        <title>The complete genome sequence of the hyperthermophilic, sulphate-reducing archaeon Archaeoglobus fulgidus.</title>
        <authorList>
            <person name="Klenk H.-P."/>
            <person name="Clayton R.A."/>
            <person name="Tomb J.-F."/>
            <person name="White O."/>
            <person name="Nelson K.E."/>
            <person name="Ketchum K.A."/>
            <person name="Dodson R.J."/>
            <person name="Gwinn M.L."/>
            <person name="Hickey E.K."/>
            <person name="Peterson J.D."/>
            <person name="Richardson D.L."/>
            <person name="Kerlavage A.R."/>
            <person name="Graham D.E."/>
            <person name="Kyrpides N.C."/>
            <person name="Fleischmann R.D."/>
            <person name="Quackenbush J."/>
            <person name="Lee N.H."/>
            <person name="Sutton G.G."/>
            <person name="Gill S.R."/>
            <person name="Kirkness E.F."/>
            <person name="Dougherty B.A."/>
            <person name="McKenney K."/>
            <person name="Adams M.D."/>
            <person name="Loftus B.J."/>
            <person name="Peterson S.N."/>
            <person name="Reich C.I."/>
            <person name="McNeil L.K."/>
            <person name="Badger J.H."/>
            <person name="Glodek A."/>
            <person name="Zhou L."/>
            <person name="Overbeek R."/>
            <person name="Gocayne J.D."/>
            <person name="Weidman J.F."/>
            <person name="McDonald L.A."/>
            <person name="Utterback T.R."/>
            <person name="Cotton M.D."/>
            <person name="Spriggs T."/>
            <person name="Artiach P."/>
            <person name="Kaine B.P."/>
            <person name="Sykes S.M."/>
            <person name="Sadow P.W."/>
            <person name="D'Andrea K.P."/>
            <person name="Bowman C."/>
            <person name="Fujii C."/>
            <person name="Garland S.A."/>
            <person name="Mason T.M."/>
            <person name="Olsen G.J."/>
            <person name="Fraser C.M."/>
            <person name="Smith H.O."/>
            <person name="Woese C.R."/>
            <person name="Venter J.C."/>
        </authorList>
    </citation>
    <scope>NUCLEOTIDE SEQUENCE [LARGE SCALE GENOMIC DNA]</scope>
    <source>
        <strain>ATCC 49558 / DSM 4304 / JCM 9628 / NBRC 100126 / VC-16</strain>
    </source>
</reference>
<protein>
    <recommendedName>
        <fullName evidence="1">Putative HTH-type transcriptional regulatory protein AF_1787</fullName>
    </recommendedName>
</protein>
<gene>
    <name type="ordered locus">AF_1787</name>
</gene>
<feature type="chain" id="PRO_0000144853" description="Putative HTH-type transcriptional regulatory protein AF_1787">
    <location>
        <begin position="1"/>
        <end position="309"/>
    </location>
</feature>
<feature type="domain" description="HTH cro/C1-type" evidence="1">
    <location>
        <begin position="131"/>
        <end position="185"/>
    </location>
</feature>
<feature type="DNA-binding region" description="H-T-H motif" evidence="1">
    <location>
        <begin position="142"/>
        <end position="161"/>
    </location>
</feature>